<feature type="chain" id="PRO_1000193486" description="Peptide chain release factor 1">
    <location>
        <begin position="1"/>
        <end position="356"/>
    </location>
</feature>
<feature type="region of interest" description="Disordered" evidence="2">
    <location>
        <begin position="281"/>
        <end position="301"/>
    </location>
</feature>
<feature type="modified residue" description="N5-methylglutamine" evidence="1">
    <location>
        <position position="232"/>
    </location>
</feature>
<dbReference type="EMBL" id="CP001358">
    <property type="protein sequence ID" value="ACL50194.1"/>
    <property type="molecule type" value="Genomic_DNA"/>
</dbReference>
<dbReference type="SMR" id="B8J4R4"/>
<dbReference type="STRING" id="525146.Ddes_2299"/>
<dbReference type="KEGG" id="dds:Ddes_2299"/>
<dbReference type="eggNOG" id="COG0216">
    <property type="taxonomic scope" value="Bacteria"/>
</dbReference>
<dbReference type="HOGENOM" id="CLU_036856_0_1_7"/>
<dbReference type="GO" id="GO:0005737">
    <property type="term" value="C:cytoplasm"/>
    <property type="evidence" value="ECO:0007669"/>
    <property type="project" value="UniProtKB-SubCell"/>
</dbReference>
<dbReference type="GO" id="GO:0016149">
    <property type="term" value="F:translation release factor activity, codon specific"/>
    <property type="evidence" value="ECO:0007669"/>
    <property type="project" value="UniProtKB-UniRule"/>
</dbReference>
<dbReference type="FunFam" id="3.30.160.20:FF:000004">
    <property type="entry name" value="Peptide chain release factor 1"/>
    <property type="match status" value="1"/>
</dbReference>
<dbReference type="FunFam" id="3.30.70.1660:FF:000002">
    <property type="entry name" value="Peptide chain release factor 1"/>
    <property type="match status" value="1"/>
</dbReference>
<dbReference type="FunFam" id="3.30.70.1660:FF:000004">
    <property type="entry name" value="Peptide chain release factor 1"/>
    <property type="match status" value="1"/>
</dbReference>
<dbReference type="Gene3D" id="3.30.160.20">
    <property type="match status" value="1"/>
</dbReference>
<dbReference type="Gene3D" id="3.30.70.1660">
    <property type="match status" value="1"/>
</dbReference>
<dbReference type="Gene3D" id="6.10.140.1950">
    <property type="match status" value="1"/>
</dbReference>
<dbReference type="HAMAP" id="MF_00093">
    <property type="entry name" value="Rel_fac_1"/>
    <property type="match status" value="1"/>
</dbReference>
<dbReference type="InterPro" id="IPR005139">
    <property type="entry name" value="PCRF"/>
</dbReference>
<dbReference type="InterPro" id="IPR000352">
    <property type="entry name" value="Pep_chain_release_fac_I"/>
</dbReference>
<dbReference type="InterPro" id="IPR045853">
    <property type="entry name" value="Pep_chain_release_fac_I_sf"/>
</dbReference>
<dbReference type="InterPro" id="IPR050057">
    <property type="entry name" value="Prokaryotic/Mito_RF"/>
</dbReference>
<dbReference type="InterPro" id="IPR004373">
    <property type="entry name" value="RF-1"/>
</dbReference>
<dbReference type="NCBIfam" id="TIGR00019">
    <property type="entry name" value="prfA"/>
    <property type="match status" value="1"/>
</dbReference>
<dbReference type="NCBIfam" id="NF001859">
    <property type="entry name" value="PRK00591.1"/>
    <property type="match status" value="1"/>
</dbReference>
<dbReference type="PANTHER" id="PTHR43804">
    <property type="entry name" value="LD18447P"/>
    <property type="match status" value="1"/>
</dbReference>
<dbReference type="PANTHER" id="PTHR43804:SF7">
    <property type="entry name" value="LD18447P"/>
    <property type="match status" value="1"/>
</dbReference>
<dbReference type="Pfam" id="PF03462">
    <property type="entry name" value="PCRF"/>
    <property type="match status" value="1"/>
</dbReference>
<dbReference type="Pfam" id="PF00472">
    <property type="entry name" value="RF-1"/>
    <property type="match status" value="1"/>
</dbReference>
<dbReference type="SMART" id="SM00937">
    <property type="entry name" value="PCRF"/>
    <property type="match status" value="1"/>
</dbReference>
<dbReference type="SUPFAM" id="SSF75620">
    <property type="entry name" value="Release factor"/>
    <property type="match status" value="1"/>
</dbReference>
<dbReference type="PROSITE" id="PS00745">
    <property type="entry name" value="RF_PROK_I"/>
    <property type="match status" value="1"/>
</dbReference>
<accession>B8J4R4</accession>
<name>RF1_DESDA</name>
<reference key="1">
    <citation type="submission" date="2009-01" db="EMBL/GenBank/DDBJ databases">
        <title>Complete sequence of Desulfovibrio desulfuricans subsp. desulfuricans str. ATCC 27774.</title>
        <authorList>
            <consortium name="US DOE Joint Genome Institute"/>
            <person name="Lucas S."/>
            <person name="Copeland A."/>
            <person name="Lapidus A."/>
            <person name="Glavina del Rio T."/>
            <person name="Tice H."/>
            <person name="Bruce D."/>
            <person name="Goodwin L."/>
            <person name="Pitluck S."/>
            <person name="Sims D."/>
            <person name="Lu M."/>
            <person name="Kiss H."/>
            <person name="Meineke L."/>
            <person name="Brettin T."/>
            <person name="Detter J.C."/>
            <person name="Han C."/>
            <person name="Larimer F."/>
            <person name="Land M."/>
            <person name="Hauser L."/>
            <person name="Kyrpides N."/>
            <person name="Ovchinnikova G."/>
            <person name="Hazen T.C."/>
        </authorList>
    </citation>
    <scope>NUCLEOTIDE SEQUENCE [LARGE SCALE GENOMIC DNA]</scope>
    <source>
        <strain>ATCC 27774 / DSM 6949 / MB</strain>
    </source>
</reference>
<keyword id="KW-0963">Cytoplasm</keyword>
<keyword id="KW-0488">Methylation</keyword>
<keyword id="KW-0648">Protein biosynthesis</keyword>
<organism>
    <name type="scientific">Desulfovibrio desulfuricans (strain ATCC 27774 / DSM 6949 / MB)</name>
    <dbReference type="NCBI Taxonomy" id="525146"/>
    <lineage>
        <taxon>Bacteria</taxon>
        <taxon>Pseudomonadati</taxon>
        <taxon>Thermodesulfobacteriota</taxon>
        <taxon>Desulfovibrionia</taxon>
        <taxon>Desulfovibrionales</taxon>
        <taxon>Desulfovibrionaceae</taxon>
        <taxon>Desulfovibrio</taxon>
    </lineage>
</organism>
<gene>
    <name evidence="1" type="primary">prfA</name>
    <name type="ordered locus">Ddes_2299</name>
</gene>
<proteinExistence type="inferred from homology"/>
<sequence length="356" mass="40054">MFAKLEGLEKKYLELEEALAQPDVFNDQDQYRKLTKAHADLSDVVELFRRHRAVSEELAENRLLLHDEDPEIRAMAQEEVHRGEAELPNLEHELKVMLLPSDPLDEKNTILEIRAGTGGEEAALFAADLFRMYTRYAELKNWKVEIMSESPSENGGYKEIICLIAGDRVYSHLKFEAGTHRVQRVPATEAQGRIHTSAATVAVMPEAEEVDVEIRPEDLRIDIYRASGAGGQHVNKTESAVRITHLPTNTVVTCQDERSQHKNKARAMKVLASRILAAERERQSSELSADRKAQVGSGDRSERIRTYNFPQGRCTDHRINLTLYSLDRIMEGELESLVEALGTAAQAEALKAQASE</sequence>
<comment type="function">
    <text evidence="1">Peptide chain release factor 1 directs the termination of translation in response to the peptide chain termination codons UAG and UAA.</text>
</comment>
<comment type="subcellular location">
    <subcellularLocation>
        <location evidence="1">Cytoplasm</location>
    </subcellularLocation>
</comment>
<comment type="PTM">
    <text evidence="1">Methylated by PrmC. Methylation increases the termination efficiency of RF1.</text>
</comment>
<comment type="similarity">
    <text evidence="1">Belongs to the prokaryotic/mitochondrial release factor family.</text>
</comment>
<evidence type="ECO:0000255" key="1">
    <source>
        <dbReference type="HAMAP-Rule" id="MF_00093"/>
    </source>
</evidence>
<evidence type="ECO:0000256" key="2">
    <source>
        <dbReference type="SAM" id="MobiDB-lite"/>
    </source>
</evidence>
<protein>
    <recommendedName>
        <fullName evidence="1">Peptide chain release factor 1</fullName>
        <shortName evidence="1">RF-1</shortName>
    </recommendedName>
</protein>